<keyword id="KW-0025">Alternative splicing</keyword>
<keyword id="KW-0966">Cell projection</keyword>
<keyword id="KW-0967">Endosome</keyword>
<keyword id="KW-0325">Glycoprotein</keyword>
<keyword id="KW-0472">Membrane</keyword>
<keyword id="KW-1267">Proteomics identification</keyword>
<keyword id="KW-1185">Reference proteome</keyword>
<keyword id="KW-0770">Synapse</keyword>
<keyword id="KW-0812">Transmembrane</keyword>
<keyword id="KW-1133">Transmembrane helix</keyword>
<reference key="1">
    <citation type="journal article" date="2003" name="Genome Res.">
        <title>The secreted protein discovery initiative (SPDI), a large-scale effort to identify novel human secreted and transmembrane proteins: a bioinformatics assessment.</title>
        <authorList>
            <person name="Clark H.F."/>
            <person name="Gurney A.L."/>
            <person name="Abaya E."/>
            <person name="Baker K."/>
            <person name="Baldwin D.T."/>
            <person name="Brush J."/>
            <person name="Chen J."/>
            <person name="Chow B."/>
            <person name="Chui C."/>
            <person name="Crowley C."/>
            <person name="Currell B."/>
            <person name="Deuel B."/>
            <person name="Dowd P."/>
            <person name="Eaton D."/>
            <person name="Foster J.S."/>
            <person name="Grimaldi C."/>
            <person name="Gu Q."/>
            <person name="Hass P.E."/>
            <person name="Heldens S."/>
            <person name="Huang A."/>
            <person name="Kim H.S."/>
            <person name="Klimowski L."/>
            <person name="Jin Y."/>
            <person name="Johnson S."/>
            <person name="Lee J."/>
            <person name="Lewis L."/>
            <person name="Liao D."/>
            <person name="Mark M.R."/>
            <person name="Robbie E."/>
            <person name="Sanchez C."/>
            <person name="Schoenfeld J."/>
            <person name="Seshagiri S."/>
            <person name="Simmons L."/>
            <person name="Singh J."/>
            <person name="Smith V."/>
            <person name="Stinson J."/>
            <person name="Vagts A."/>
            <person name="Vandlen R.L."/>
            <person name="Watanabe C."/>
            <person name="Wieand D."/>
            <person name="Woods K."/>
            <person name="Xie M.-H."/>
            <person name="Yansura D.G."/>
            <person name="Yi S."/>
            <person name="Yu G."/>
            <person name="Yuan J."/>
            <person name="Zhang M."/>
            <person name="Zhang Z."/>
            <person name="Goddard A.D."/>
            <person name="Wood W.I."/>
            <person name="Godowski P.J."/>
            <person name="Gray A.M."/>
        </authorList>
    </citation>
    <scope>NUCLEOTIDE SEQUENCE [LARGE SCALE MRNA] (ISOFORM 1)</scope>
    <scope>VARIANT LEU-84</scope>
</reference>
<reference key="2">
    <citation type="submission" date="2005-09" db="EMBL/GenBank/DDBJ databases">
        <authorList>
            <person name="Mural R.J."/>
            <person name="Istrail S."/>
            <person name="Sutton G.G."/>
            <person name="Florea L."/>
            <person name="Halpern A.L."/>
            <person name="Mobarry C.M."/>
            <person name="Lippert R."/>
            <person name="Walenz B."/>
            <person name="Shatkay H."/>
            <person name="Dew I."/>
            <person name="Miller J.R."/>
            <person name="Flanigan M.J."/>
            <person name="Edwards N.J."/>
            <person name="Bolanos R."/>
            <person name="Fasulo D."/>
            <person name="Halldorsson B.V."/>
            <person name="Hannenhalli S."/>
            <person name="Turner R."/>
            <person name="Yooseph S."/>
            <person name="Lu F."/>
            <person name="Nusskern D.R."/>
            <person name="Shue B.C."/>
            <person name="Zheng X.H."/>
            <person name="Zhong F."/>
            <person name="Delcher A.L."/>
            <person name="Huson D.H."/>
            <person name="Kravitz S.A."/>
            <person name="Mouchard L."/>
            <person name="Reinert K."/>
            <person name="Remington K.A."/>
            <person name="Clark A.G."/>
            <person name="Waterman M.S."/>
            <person name="Eichler E.E."/>
            <person name="Adams M.D."/>
            <person name="Hunkapiller M.W."/>
            <person name="Myers E.W."/>
            <person name="Venter J.C."/>
        </authorList>
    </citation>
    <scope>NUCLEOTIDE SEQUENCE [LARGE SCALE GENOMIC DNA]</scope>
</reference>
<reference key="3">
    <citation type="journal article" date="2004" name="Genome Res.">
        <title>The status, quality, and expansion of the NIH full-length cDNA project: the Mammalian Gene Collection (MGC).</title>
        <authorList>
            <consortium name="The MGC Project Team"/>
        </authorList>
    </citation>
    <scope>NUCLEOTIDE SEQUENCE [LARGE SCALE MRNA] (ISOFORM 1)</scope>
    <source>
        <tissue>Brain</tissue>
    </source>
</reference>
<reference key="4">
    <citation type="journal article" date="2000" name="DNA Res.">
        <title>Prediction of the coding sequences of unidentified human genes. XIX. The complete sequences of 100 new cDNA clones from brain which code for large proteins in vitro.</title>
        <authorList>
            <person name="Nagase T."/>
            <person name="Kikuno R."/>
            <person name="Hattori A."/>
            <person name="Kondo Y."/>
            <person name="Okumura K."/>
            <person name="Ohara O."/>
        </authorList>
    </citation>
    <scope>NUCLEOTIDE SEQUENCE [LARGE SCALE MRNA] OF 7-575 (ISOFORM 2)</scope>
    <scope>VARIANT LEU-84</scope>
    <source>
        <tissue>Brain</tissue>
    </source>
</reference>
<reference key="5">
    <citation type="journal article" date="2001" name="Genome Res.">
        <title>Towards a catalog of human genes and proteins: sequencing and analysis of 500 novel complete protein coding human cDNAs.</title>
        <authorList>
            <person name="Wiemann S."/>
            <person name="Weil B."/>
            <person name="Wellenreuther R."/>
            <person name="Gassenhuber J."/>
            <person name="Glassl S."/>
            <person name="Ansorge W."/>
            <person name="Boecher M."/>
            <person name="Bloecker H."/>
            <person name="Bauersachs S."/>
            <person name="Blum H."/>
            <person name="Lauber J."/>
            <person name="Duesterhoeft A."/>
            <person name="Beyer A."/>
            <person name="Koehrer K."/>
            <person name="Strack N."/>
            <person name="Mewes H.-W."/>
            <person name="Ottenwaelder B."/>
            <person name="Obermaier B."/>
            <person name="Tampe J."/>
            <person name="Heubner D."/>
            <person name="Wambutt R."/>
            <person name="Korn B."/>
            <person name="Klein M."/>
            <person name="Poustka A."/>
        </authorList>
    </citation>
    <scope>NUCLEOTIDE SEQUENCE [LARGE SCALE MRNA] OF 113-575 (ISOFORM 1)</scope>
    <source>
        <tissue>Amygdala</tissue>
    </source>
</reference>
<evidence type="ECO:0000250" key="1">
    <source>
        <dbReference type="UniProtKB" id="Q8BHE4"/>
    </source>
</evidence>
<evidence type="ECO:0000255" key="2"/>
<evidence type="ECO:0000256" key="3">
    <source>
        <dbReference type="SAM" id="MobiDB-lite"/>
    </source>
</evidence>
<evidence type="ECO:0000269" key="4">
    <source>
    </source>
</evidence>
<evidence type="ECO:0000269" key="5">
    <source>
    </source>
</evidence>
<evidence type="ECO:0000303" key="6">
    <source>
    </source>
</evidence>
<evidence type="ECO:0000305" key="7"/>
<evidence type="ECO:0000312" key="8">
    <source>
        <dbReference type="HGNC" id="HGNC:28451"/>
    </source>
</evidence>
<comment type="function">
    <text evidence="1">Transmembrane protein required for proper cognitive functions. Involved in the development of dentate gyrus (DG) neuron circuitry, is necessary for AMPA receptors surface expression and proper excitatory postsynaptic currents of DG granule neurons. Regulates the organization and stability of the microtubule network of sensory neurons to allow axonal transport. Through the interaction with DST, mediates the docking of the dynein/dynactin motor complex to vesicle cargos for retrograde axonal transport. In hippocampal neurons, required for BDNF-dependent dendrite outgrowth. Cooperates with SH3GL2 and recruits the WAVE1 complex to facilitate actin-dependent BDNF:NTRK2 early endocytic trafficking and mediate signaling from early endosomes.</text>
</comment>
<comment type="subunit">
    <text evidence="1">Interacts with DST (isoform 1). Interacts with SH3GL2. Interacts (via N-terminus) with CYFIP1 and CYFIP2; the interactions associate TMEM108 with the WAVE1 complex.</text>
</comment>
<comment type="interaction">
    <interactant intactId="EBI-7100456">
        <id>Q6UXF1</id>
    </interactant>
    <interactant intactId="EBI-741101">
        <id>Q13643</id>
        <label>FHL3</label>
    </interactant>
    <organismsDiffer>false</organismsDiffer>
    <experiments>3</experiments>
</comment>
<comment type="interaction">
    <interactant intactId="EBI-7100456">
        <id>Q6UXF1</id>
    </interactant>
    <interactant intactId="EBI-3918971">
        <id>Q9Y680</id>
        <label>FKBP7</label>
    </interactant>
    <organismsDiffer>false</organismsDiffer>
    <experiments>3</experiments>
</comment>
<comment type="interaction">
    <interactant intactId="EBI-7100456">
        <id>Q6UXF1</id>
    </interactant>
    <interactant intactId="EBI-744081">
        <id>Q96EQ0</id>
        <label>SGTB</label>
    </interactant>
    <organismsDiffer>false</organismsDiffer>
    <experiments>3</experiments>
</comment>
<comment type="subcellular location">
    <subcellularLocation>
        <location evidence="1">Membrane</location>
        <topology evidence="2">Multi-pass membrane protein</topology>
    </subcellularLocation>
    <subcellularLocation>
        <location evidence="1">Postsynaptic density</location>
    </subcellularLocation>
    <subcellularLocation>
        <location evidence="1">Endosome membrane</location>
    </subcellularLocation>
    <subcellularLocation>
        <location evidence="1">Cell projection</location>
        <location evidence="1">Axon</location>
    </subcellularLocation>
    <subcellularLocation>
        <location evidence="1">Cell projection</location>
        <location evidence="1">Dendrite</location>
    </subcellularLocation>
    <subcellularLocation>
        <location evidence="1">Early endosome</location>
    </subcellularLocation>
</comment>
<comment type="alternative products">
    <event type="alternative splicing"/>
    <isoform>
        <id>Q6UXF1-1</id>
        <name>1</name>
        <sequence type="displayed"/>
    </isoform>
    <isoform>
        <id>Q6UXF1-2</id>
        <name>2</name>
        <sequence type="described" ref="VSP_019494 VSP_019495"/>
    </isoform>
</comment>
<comment type="PTM">
    <text evidence="1">Glycosylated.</text>
</comment>
<dbReference type="EMBL" id="AY358381">
    <property type="protein sequence ID" value="AAQ88747.1"/>
    <property type="molecule type" value="mRNA"/>
</dbReference>
<dbReference type="EMBL" id="CH471052">
    <property type="protein sequence ID" value="EAW79182.1"/>
    <property type="molecule type" value="Genomic_DNA"/>
</dbReference>
<dbReference type="EMBL" id="CH471052">
    <property type="protein sequence ID" value="EAW79183.1"/>
    <property type="molecule type" value="Genomic_DNA"/>
</dbReference>
<dbReference type="EMBL" id="CH471052">
    <property type="protein sequence ID" value="EAW79184.1"/>
    <property type="molecule type" value="Genomic_DNA"/>
</dbReference>
<dbReference type="EMBL" id="BC000568">
    <property type="protein sequence ID" value="AAH00568.1"/>
    <property type="molecule type" value="mRNA"/>
</dbReference>
<dbReference type="EMBL" id="AB051477">
    <property type="protein sequence ID" value="BAB21781.1"/>
    <property type="molecule type" value="mRNA"/>
</dbReference>
<dbReference type="EMBL" id="AL136578">
    <property type="protein sequence ID" value="CAB66513.3"/>
    <property type="molecule type" value="mRNA"/>
</dbReference>
<dbReference type="CCDS" id="CCDS33858.1">
    <molecule id="Q6UXF1-1"/>
</dbReference>
<dbReference type="RefSeq" id="NP_001129941.1">
    <molecule id="Q6UXF1-1"/>
    <property type="nucleotide sequence ID" value="NM_001136469.3"/>
</dbReference>
<dbReference type="RefSeq" id="NP_001269794.1">
    <property type="nucleotide sequence ID" value="NM_001282865.1"/>
</dbReference>
<dbReference type="RefSeq" id="NP_076432.1">
    <molecule id="Q6UXF1-1"/>
    <property type="nucleotide sequence ID" value="NM_023943.4"/>
</dbReference>
<dbReference type="RefSeq" id="XP_011511399.1">
    <property type="nucleotide sequence ID" value="XM_011513097.2"/>
</dbReference>
<dbReference type="BioGRID" id="122447">
    <property type="interactions" value="68"/>
</dbReference>
<dbReference type="FunCoup" id="Q6UXF1">
    <property type="interactions" value="24"/>
</dbReference>
<dbReference type="IntAct" id="Q6UXF1">
    <property type="interactions" value="29"/>
</dbReference>
<dbReference type="MINT" id="Q6UXF1"/>
<dbReference type="STRING" id="9606.ENSP00000324651"/>
<dbReference type="GlyGen" id="Q6UXF1">
    <property type="glycosylation" value="4 sites, 1 N-linked glycan (2 sites)"/>
</dbReference>
<dbReference type="iPTMnet" id="Q6UXF1"/>
<dbReference type="PhosphoSitePlus" id="Q6UXF1"/>
<dbReference type="BioMuta" id="TMEM108"/>
<dbReference type="DMDM" id="109895211"/>
<dbReference type="MassIVE" id="Q6UXF1"/>
<dbReference type="PaxDb" id="9606-ENSP00000324651"/>
<dbReference type="PeptideAtlas" id="Q6UXF1"/>
<dbReference type="ProteomicsDB" id="67601">
    <molecule id="Q6UXF1-1"/>
</dbReference>
<dbReference type="ProteomicsDB" id="67602">
    <molecule id="Q6UXF1-2"/>
</dbReference>
<dbReference type="Antibodypedia" id="17731">
    <property type="antibodies" value="88 antibodies from 19 providers"/>
</dbReference>
<dbReference type="DNASU" id="66000"/>
<dbReference type="Ensembl" id="ENST00000321871.11">
    <molecule id="Q6UXF1-1"/>
    <property type="protein sequence ID" value="ENSP00000324651.6"/>
    <property type="gene ID" value="ENSG00000144868.14"/>
</dbReference>
<dbReference type="Ensembl" id="ENST00000393130.7">
    <molecule id="Q6UXF1-1"/>
    <property type="protein sequence ID" value="ENSP00000376838.3"/>
    <property type="gene ID" value="ENSG00000144868.14"/>
</dbReference>
<dbReference type="GeneID" id="66000"/>
<dbReference type="KEGG" id="hsa:66000"/>
<dbReference type="MANE-Select" id="ENST00000321871.11">
    <property type="protein sequence ID" value="ENSP00000324651.6"/>
    <property type="RefSeq nucleotide sequence ID" value="NM_023943.4"/>
    <property type="RefSeq protein sequence ID" value="NP_076432.1"/>
</dbReference>
<dbReference type="UCSC" id="uc003eph.5">
    <molecule id="Q6UXF1-1"/>
    <property type="organism name" value="human"/>
</dbReference>
<dbReference type="AGR" id="HGNC:28451"/>
<dbReference type="CTD" id="66000"/>
<dbReference type="DisGeNET" id="66000"/>
<dbReference type="GeneCards" id="TMEM108"/>
<dbReference type="HGNC" id="HGNC:28451">
    <property type="gene designation" value="TMEM108"/>
</dbReference>
<dbReference type="HPA" id="ENSG00000144868">
    <property type="expression patterns" value="Tissue enhanced (retina, skeletal muscle)"/>
</dbReference>
<dbReference type="MIM" id="617361">
    <property type="type" value="gene"/>
</dbReference>
<dbReference type="neXtProt" id="NX_Q6UXF1"/>
<dbReference type="OpenTargets" id="ENSG00000144868"/>
<dbReference type="PharmGKB" id="PA142670759"/>
<dbReference type="VEuPathDB" id="HostDB:ENSG00000144868"/>
<dbReference type="eggNOG" id="ENOG502RXTY">
    <property type="taxonomic scope" value="Eukaryota"/>
</dbReference>
<dbReference type="GeneTree" id="ENSGT00390000000626"/>
<dbReference type="HOGENOM" id="CLU_040547_1_0_1"/>
<dbReference type="InParanoid" id="Q6UXF1"/>
<dbReference type="OMA" id="KPMGATS"/>
<dbReference type="OrthoDB" id="9944393at2759"/>
<dbReference type="PAN-GO" id="Q6UXF1">
    <property type="GO annotations" value="7 GO annotations based on evolutionary models"/>
</dbReference>
<dbReference type="PhylomeDB" id="Q6UXF1"/>
<dbReference type="TreeFam" id="TF336337"/>
<dbReference type="PathwayCommons" id="Q6UXF1"/>
<dbReference type="SignaLink" id="Q6UXF1"/>
<dbReference type="BioGRID-ORCS" id="66000">
    <property type="hits" value="14 hits in 1146 CRISPR screens"/>
</dbReference>
<dbReference type="ChiTaRS" id="TMEM108">
    <property type="organism name" value="human"/>
</dbReference>
<dbReference type="GenomeRNAi" id="66000"/>
<dbReference type="Pharos" id="Q6UXF1">
    <property type="development level" value="Tbio"/>
</dbReference>
<dbReference type="PRO" id="PR:Q6UXF1"/>
<dbReference type="Proteomes" id="UP000005640">
    <property type="component" value="Chromosome 3"/>
</dbReference>
<dbReference type="RNAct" id="Q6UXF1">
    <property type="molecule type" value="protein"/>
</dbReference>
<dbReference type="Bgee" id="ENSG00000144868">
    <property type="expression patterns" value="Expressed in cortical plate and 145 other cell types or tissues"/>
</dbReference>
<dbReference type="ExpressionAtlas" id="Q6UXF1">
    <property type="expression patterns" value="baseline and differential"/>
</dbReference>
<dbReference type="GO" id="GO:0030424">
    <property type="term" value="C:axon"/>
    <property type="evidence" value="ECO:0000250"/>
    <property type="project" value="UniProtKB"/>
</dbReference>
<dbReference type="GO" id="GO:1904115">
    <property type="term" value="C:axon cytoplasm"/>
    <property type="evidence" value="ECO:0007669"/>
    <property type="project" value="GOC"/>
</dbReference>
<dbReference type="GO" id="GO:0030425">
    <property type="term" value="C:dendrite"/>
    <property type="evidence" value="ECO:0007669"/>
    <property type="project" value="UniProtKB-SubCell"/>
</dbReference>
<dbReference type="GO" id="GO:0005769">
    <property type="term" value="C:early endosome"/>
    <property type="evidence" value="ECO:0000250"/>
    <property type="project" value="UniProtKB"/>
</dbReference>
<dbReference type="GO" id="GO:0010008">
    <property type="term" value="C:endosome membrane"/>
    <property type="evidence" value="ECO:0000250"/>
    <property type="project" value="UniProtKB"/>
</dbReference>
<dbReference type="GO" id="GO:0098978">
    <property type="term" value="C:glutamatergic synapse"/>
    <property type="evidence" value="ECO:0007669"/>
    <property type="project" value="Ensembl"/>
</dbReference>
<dbReference type="GO" id="GO:0014069">
    <property type="term" value="C:postsynaptic density"/>
    <property type="evidence" value="ECO:0000250"/>
    <property type="project" value="UniProtKB"/>
</dbReference>
<dbReference type="GO" id="GO:0098839">
    <property type="term" value="C:postsynaptic density membrane"/>
    <property type="evidence" value="ECO:0007669"/>
    <property type="project" value="Ensembl"/>
</dbReference>
<dbReference type="GO" id="GO:0036477">
    <property type="term" value="C:somatodendritic compartment"/>
    <property type="evidence" value="ECO:0000250"/>
    <property type="project" value="UniProtKB"/>
</dbReference>
<dbReference type="GO" id="GO:1990416">
    <property type="term" value="P:cellular response to brain-derived neurotrophic factor stimulus"/>
    <property type="evidence" value="ECO:0000250"/>
    <property type="project" value="UniProtKB"/>
</dbReference>
<dbReference type="GO" id="GO:0097484">
    <property type="term" value="P:dendrite extension"/>
    <property type="evidence" value="ECO:0000250"/>
    <property type="project" value="UniProtKB"/>
</dbReference>
<dbReference type="GO" id="GO:0021542">
    <property type="term" value="P:dentate gyrus development"/>
    <property type="evidence" value="ECO:0000250"/>
    <property type="project" value="UniProtKB"/>
</dbReference>
<dbReference type="GO" id="GO:0098815">
    <property type="term" value="P:modulation of excitatory postsynaptic potential"/>
    <property type="evidence" value="ECO:0000250"/>
    <property type="project" value="UniProtKB"/>
</dbReference>
<dbReference type="GO" id="GO:0031175">
    <property type="term" value="P:neuron projection development"/>
    <property type="evidence" value="ECO:0000250"/>
    <property type="project" value="UniProtKB"/>
</dbReference>
<dbReference type="GO" id="GO:0051388">
    <property type="term" value="P:positive regulation of neurotrophin TRK receptor signaling pathway"/>
    <property type="evidence" value="ECO:0000250"/>
    <property type="project" value="UniProtKB"/>
</dbReference>
<dbReference type="GO" id="GO:0097106">
    <property type="term" value="P:postsynaptic density organization"/>
    <property type="evidence" value="ECO:0000250"/>
    <property type="project" value="UniProtKB"/>
</dbReference>
<dbReference type="GO" id="GO:0006898">
    <property type="term" value="P:receptor-mediated endocytosis"/>
    <property type="evidence" value="ECO:0000250"/>
    <property type="project" value="UniProtKB"/>
</dbReference>
<dbReference type="GO" id="GO:0098696">
    <property type="term" value="P:regulation of neurotransmitter receptor localization to postsynaptic specialization membrane"/>
    <property type="evidence" value="ECO:0007669"/>
    <property type="project" value="Ensembl"/>
</dbReference>
<dbReference type="GO" id="GO:0008090">
    <property type="term" value="P:retrograde axonal transport"/>
    <property type="evidence" value="ECO:0000250"/>
    <property type="project" value="UniProtKB"/>
</dbReference>
<dbReference type="InterPro" id="IPR031508">
    <property type="entry name" value="TMEM108"/>
</dbReference>
<dbReference type="PANTHER" id="PTHR28673">
    <property type="entry name" value="TRANSMEMBRANE PROTEIN 108"/>
    <property type="match status" value="1"/>
</dbReference>
<dbReference type="PANTHER" id="PTHR28673:SF1">
    <property type="entry name" value="TRANSMEMBRANE PROTEIN 108"/>
    <property type="match status" value="1"/>
</dbReference>
<dbReference type="Pfam" id="PF15759">
    <property type="entry name" value="TMEM108"/>
    <property type="match status" value="1"/>
</dbReference>
<dbReference type="PROSITE" id="PS00430">
    <property type="entry name" value="TONB_DEPENDENT_REC_1"/>
    <property type="match status" value="1"/>
</dbReference>
<protein>
    <recommendedName>
        <fullName evidence="8">Transmembrane protein 108</fullName>
    </recommendedName>
    <alternativeName>
        <fullName evidence="7">Retrolinkin</fullName>
    </alternativeName>
</protein>
<sequence length="575" mass="59948">MKRSLQALYCQLLSFLLILALTEALAFAIQEPSPRESLQVLPSGTPPGTMVTAPHSSTRHTSVVMLTPNPDGPPSQAAAPMATPTPRAEGHPPTHTISTIAATVTAPHSESSLSTGPAPAAMATTSSKPEGRPRGQAAPTILLTKPPGATSRPTTAPPRTTTRRPPRPPGSSRKGAGNSSRPVPPAPGGHSRSKEGQRGRNPSSTPLGQKRPLGKIFQIYKGNFTGSVEPEPSTLTPRTPLWGYSSSPQPQTVAATTVPSNTSWAPTTTSLGPAKDKPGLRRAAQGGGSTFTSQGGTPDATAASGAPVSPQAAPVPSQRPHHGDPQDGPSHSDSWLTVTPGTSRPLSTSSGVFTAATGPTPAAFDTSVSAPSQGIPQGASTTPQAPTHPSRVSESTISGAKEETVATLTMTDRVPSPLSTVVSTATGNFLNRLVPAGTWKPGTAGNISHVAEGDKPQHRATICLSKMDIAWVILAISVPISSCSVLLTVCCMKRKKKTANPENNLSYWNNTITMDYFNRHAVELPREIQSLETSEDQLSEPRSPANGDYRDTGMVLVNPFCQETLFVGNDQVSEI</sequence>
<proteinExistence type="evidence at protein level"/>
<gene>
    <name evidence="8" type="primary">TMEM108</name>
    <name type="synonym">KIAA1690</name>
    <name type="synonym">RTLN</name>
    <name type="ORF">UNQ1875/PRO4318</name>
</gene>
<organism>
    <name type="scientific">Homo sapiens</name>
    <name type="common">Human</name>
    <dbReference type="NCBI Taxonomy" id="9606"/>
    <lineage>
        <taxon>Eukaryota</taxon>
        <taxon>Metazoa</taxon>
        <taxon>Chordata</taxon>
        <taxon>Craniata</taxon>
        <taxon>Vertebrata</taxon>
        <taxon>Euteleostomi</taxon>
        <taxon>Mammalia</taxon>
        <taxon>Eutheria</taxon>
        <taxon>Euarchontoglires</taxon>
        <taxon>Primates</taxon>
        <taxon>Haplorrhini</taxon>
        <taxon>Catarrhini</taxon>
        <taxon>Hominidae</taxon>
        <taxon>Homo</taxon>
    </lineage>
</organism>
<accession>Q6UXF1</accession>
<accession>D3DNC9</accession>
<accession>Q9BQH1</accession>
<accession>Q9BW81</accession>
<accession>Q9C0H3</accession>
<name>TM108_HUMAN</name>
<feature type="chain" id="PRO_0000243913" description="Transmembrane protein 108">
    <location>
        <begin position="1"/>
        <end position="575"/>
    </location>
</feature>
<feature type="transmembrane region" description="Helical" evidence="2">
    <location>
        <begin position="9"/>
        <end position="29"/>
    </location>
</feature>
<feature type="transmembrane region" description="Helical" evidence="2">
    <location>
        <begin position="469"/>
        <end position="489"/>
    </location>
</feature>
<feature type="region of interest" description="Interaction with SH3GL2" evidence="1">
    <location>
        <begin position="31"/>
        <end position="169"/>
    </location>
</feature>
<feature type="region of interest" description="Disordered" evidence="3">
    <location>
        <begin position="65"/>
        <end position="398"/>
    </location>
</feature>
<feature type="region of interest" description="Interaction with DST (isoform 1)" evidence="1">
    <location>
        <begin position="173"/>
        <end position="407"/>
    </location>
</feature>
<feature type="region of interest" description="Interaction with CYFIP2" evidence="1">
    <location>
        <begin position="490"/>
        <end position="575"/>
    </location>
</feature>
<feature type="compositionally biased region" description="Low complexity" evidence="3">
    <location>
        <begin position="74"/>
        <end position="87"/>
    </location>
</feature>
<feature type="compositionally biased region" description="Polar residues" evidence="3">
    <location>
        <begin position="95"/>
        <end position="115"/>
    </location>
</feature>
<feature type="compositionally biased region" description="Low complexity" evidence="3">
    <location>
        <begin position="146"/>
        <end position="160"/>
    </location>
</feature>
<feature type="compositionally biased region" description="Polar residues" evidence="3">
    <location>
        <begin position="244"/>
        <end position="271"/>
    </location>
</feature>
<feature type="compositionally biased region" description="Low complexity" evidence="3">
    <location>
        <begin position="290"/>
        <end position="318"/>
    </location>
</feature>
<feature type="compositionally biased region" description="Polar residues" evidence="3">
    <location>
        <begin position="329"/>
        <end position="352"/>
    </location>
</feature>
<feature type="compositionally biased region" description="Low complexity" evidence="3">
    <location>
        <begin position="353"/>
        <end position="366"/>
    </location>
</feature>
<feature type="compositionally biased region" description="Polar residues" evidence="3">
    <location>
        <begin position="367"/>
        <end position="398"/>
    </location>
</feature>
<feature type="splice variant" id="VSP_019494" description="In isoform 2." evidence="6">
    <original>VLL</original>
    <variation>DPI</variation>
    <location>
        <begin position="485"/>
        <end position="487"/>
    </location>
</feature>
<feature type="splice variant" id="VSP_019495" description="In isoform 2." evidence="6">
    <location>
        <begin position="488"/>
        <end position="575"/>
    </location>
</feature>
<feature type="sequence variant" id="VAR_051427" description="In dbSNP:rs34111099." evidence="4 5">
    <original>P</original>
    <variation>L</variation>
    <location>
        <position position="84"/>
    </location>
</feature>
<feature type="sequence conflict" description="In Ref. 1; AAQ88747." evidence="7" ref="1">
    <original>H</original>
    <variation>Y</variation>
    <location>
        <position position="108"/>
    </location>
</feature>